<accession>A6VGL9</accession>
<proteinExistence type="inferred from homology"/>
<sequence length="183" mass="20716">MKLIGITGMPGSGKSAITKLAEKYKITVVSMGDVVRHETSKQGLILNPENVGNTAVKLRELHGKEAIAIPCLNYVNEKYNCEDFVIIEGIRSIYEVNYLKKHAKLDIIAIHSSPKTRFDRLSGRNREDDSNDWNTFVERDERELNFSIGNVIALSDYMVVNEGNYNDFIHDLENTLKNIIKAD</sequence>
<evidence type="ECO:0000255" key="1">
    <source>
        <dbReference type="HAMAP-Rule" id="MF_01111"/>
    </source>
</evidence>
<protein>
    <recommendedName>
        <fullName evidence="1">UPF0200 protein MmarC7_0527</fullName>
    </recommendedName>
</protein>
<keyword id="KW-0067">ATP-binding</keyword>
<keyword id="KW-0547">Nucleotide-binding</keyword>
<reference key="1">
    <citation type="submission" date="2007-06" db="EMBL/GenBank/DDBJ databases">
        <title>Complete sequence of Methanococcus maripaludis C7.</title>
        <authorList>
            <consortium name="US DOE Joint Genome Institute"/>
            <person name="Copeland A."/>
            <person name="Lucas S."/>
            <person name="Lapidus A."/>
            <person name="Barry K."/>
            <person name="Glavina del Rio T."/>
            <person name="Dalin E."/>
            <person name="Tice H."/>
            <person name="Pitluck S."/>
            <person name="Clum A."/>
            <person name="Schmutz J."/>
            <person name="Larimer F."/>
            <person name="Land M."/>
            <person name="Hauser L."/>
            <person name="Kyrpides N."/>
            <person name="Anderson I."/>
            <person name="Sieprawska-Lupa M."/>
            <person name="Whitman W.B."/>
            <person name="Richardson P."/>
        </authorList>
    </citation>
    <scope>NUCLEOTIDE SEQUENCE [LARGE SCALE GENOMIC DNA]</scope>
    <source>
        <strain>C7 / ATCC BAA-1331</strain>
    </source>
</reference>
<feature type="chain" id="PRO_1000065149" description="UPF0200 protein MmarC7_0527">
    <location>
        <begin position="1"/>
        <end position="183"/>
    </location>
</feature>
<feature type="binding site" evidence="1">
    <location>
        <begin position="8"/>
        <end position="15"/>
    </location>
    <ligand>
        <name>ATP</name>
        <dbReference type="ChEBI" id="CHEBI:30616"/>
    </ligand>
</feature>
<comment type="similarity">
    <text evidence="1">Belongs to the UPF0200 family.</text>
</comment>
<gene>
    <name type="ordered locus">MmarC7_0527</name>
</gene>
<dbReference type="EMBL" id="CP000745">
    <property type="protein sequence ID" value="ABR65595.1"/>
    <property type="molecule type" value="Genomic_DNA"/>
</dbReference>
<dbReference type="SMR" id="A6VGL9"/>
<dbReference type="STRING" id="426368.MmarC7_0527"/>
<dbReference type="KEGG" id="mmz:MmarC7_0527"/>
<dbReference type="eggNOG" id="arCOG01045">
    <property type="taxonomic scope" value="Archaea"/>
</dbReference>
<dbReference type="HOGENOM" id="CLU_096329_1_0_2"/>
<dbReference type="OrthoDB" id="85381at2157"/>
<dbReference type="GO" id="GO:0005524">
    <property type="term" value="F:ATP binding"/>
    <property type="evidence" value="ECO:0007669"/>
    <property type="project" value="UniProtKB-UniRule"/>
</dbReference>
<dbReference type="Gene3D" id="3.40.50.300">
    <property type="entry name" value="P-loop containing nucleotide triphosphate hydrolases"/>
    <property type="match status" value="1"/>
</dbReference>
<dbReference type="HAMAP" id="MF_01111">
    <property type="entry name" value="UPF0200"/>
    <property type="match status" value="1"/>
</dbReference>
<dbReference type="InterPro" id="IPR022970">
    <property type="entry name" value="NTP_hydrolase-rel"/>
</dbReference>
<dbReference type="InterPro" id="IPR027417">
    <property type="entry name" value="P-loop_NTPase"/>
</dbReference>
<dbReference type="PANTHER" id="PTHR41930:SF1">
    <property type="entry name" value="DEPHOSPHO-COA KINASE"/>
    <property type="match status" value="1"/>
</dbReference>
<dbReference type="PANTHER" id="PTHR41930">
    <property type="entry name" value="UPF0200 PROTEIN MJ1399"/>
    <property type="match status" value="1"/>
</dbReference>
<dbReference type="Pfam" id="PF13207">
    <property type="entry name" value="AAA_17"/>
    <property type="match status" value="1"/>
</dbReference>
<dbReference type="SUPFAM" id="SSF52540">
    <property type="entry name" value="P-loop containing nucleoside triphosphate hydrolases"/>
    <property type="match status" value="1"/>
</dbReference>
<organism>
    <name type="scientific">Methanococcus maripaludis (strain C7 / ATCC BAA-1331)</name>
    <dbReference type="NCBI Taxonomy" id="426368"/>
    <lineage>
        <taxon>Archaea</taxon>
        <taxon>Methanobacteriati</taxon>
        <taxon>Methanobacteriota</taxon>
        <taxon>Methanomada group</taxon>
        <taxon>Methanococci</taxon>
        <taxon>Methanococcales</taxon>
        <taxon>Methanococcaceae</taxon>
        <taxon>Methanococcus</taxon>
    </lineage>
</organism>
<name>Y527_METM7</name>